<dbReference type="EC" id="3.2.2.23" evidence="2"/>
<dbReference type="EC" id="4.2.99.18" evidence="2"/>
<dbReference type="EMBL" id="CP001233">
    <property type="protein sequence ID" value="ACP04541.1"/>
    <property type="molecule type" value="Genomic_DNA"/>
</dbReference>
<dbReference type="RefSeq" id="WP_001114647.1">
    <property type="nucleotide sequence ID" value="NC_012578.1"/>
</dbReference>
<dbReference type="SMR" id="C3LQI3"/>
<dbReference type="KEGG" id="vcm:VCM66_0209"/>
<dbReference type="HOGENOM" id="CLU_038423_1_1_6"/>
<dbReference type="Proteomes" id="UP000001217">
    <property type="component" value="Chromosome I"/>
</dbReference>
<dbReference type="GO" id="GO:0034039">
    <property type="term" value="F:8-oxo-7,8-dihydroguanine DNA N-glycosylase activity"/>
    <property type="evidence" value="ECO:0007669"/>
    <property type="project" value="TreeGrafter"/>
</dbReference>
<dbReference type="GO" id="GO:0140078">
    <property type="term" value="F:class I DNA-(apurinic or apyrimidinic site) endonuclease activity"/>
    <property type="evidence" value="ECO:0007669"/>
    <property type="project" value="UniProtKB-EC"/>
</dbReference>
<dbReference type="GO" id="GO:0003684">
    <property type="term" value="F:damaged DNA binding"/>
    <property type="evidence" value="ECO:0007669"/>
    <property type="project" value="InterPro"/>
</dbReference>
<dbReference type="GO" id="GO:0008270">
    <property type="term" value="F:zinc ion binding"/>
    <property type="evidence" value="ECO:0007669"/>
    <property type="project" value="UniProtKB-UniRule"/>
</dbReference>
<dbReference type="GO" id="GO:0006284">
    <property type="term" value="P:base-excision repair"/>
    <property type="evidence" value="ECO:0007669"/>
    <property type="project" value="InterPro"/>
</dbReference>
<dbReference type="CDD" id="cd08966">
    <property type="entry name" value="EcFpg-like_N"/>
    <property type="match status" value="1"/>
</dbReference>
<dbReference type="FunFam" id="1.10.8.50:FF:000003">
    <property type="entry name" value="Formamidopyrimidine-DNA glycosylase"/>
    <property type="match status" value="1"/>
</dbReference>
<dbReference type="FunFam" id="3.20.190.10:FF:000001">
    <property type="entry name" value="Formamidopyrimidine-DNA glycosylase"/>
    <property type="match status" value="1"/>
</dbReference>
<dbReference type="Gene3D" id="1.10.8.50">
    <property type="match status" value="1"/>
</dbReference>
<dbReference type="Gene3D" id="3.20.190.10">
    <property type="entry name" value="MutM-like, N-terminal"/>
    <property type="match status" value="1"/>
</dbReference>
<dbReference type="HAMAP" id="MF_00103">
    <property type="entry name" value="Fapy_DNA_glycosyl"/>
    <property type="match status" value="1"/>
</dbReference>
<dbReference type="InterPro" id="IPR015886">
    <property type="entry name" value="DNA_glyclase/AP_lyase_DNA-bd"/>
</dbReference>
<dbReference type="InterPro" id="IPR015887">
    <property type="entry name" value="DNA_glyclase_Znf_dom_DNA_BS"/>
</dbReference>
<dbReference type="InterPro" id="IPR020629">
    <property type="entry name" value="Formamido-pyr_DNA_Glyclase"/>
</dbReference>
<dbReference type="InterPro" id="IPR012319">
    <property type="entry name" value="FPG_cat"/>
</dbReference>
<dbReference type="InterPro" id="IPR035937">
    <property type="entry name" value="MutM-like_N-ter"/>
</dbReference>
<dbReference type="InterPro" id="IPR010979">
    <property type="entry name" value="Ribosomal_uS13-like_H2TH"/>
</dbReference>
<dbReference type="InterPro" id="IPR000214">
    <property type="entry name" value="Znf_DNA_glyclase/AP_lyase"/>
</dbReference>
<dbReference type="InterPro" id="IPR010663">
    <property type="entry name" value="Znf_FPG/IleRS"/>
</dbReference>
<dbReference type="NCBIfam" id="TIGR00577">
    <property type="entry name" value="fpg"/>
    <property type="match status" value="1"/>
</dbReference>
<dbReference type="NCBIfam" id="NF002211">
    <property type="entry name" value="PRK01103.1"/>
    <property type="match status" value="1"/>
</dbReference>
<dbReference type="PANTHER" id="PTHR22993">
    <property type="entry name" value="FORMAMIDOPYRIMIDINE-DNA GLYCOSYLASE"/>
    <property type="match status" value="1"/>
</dbReference>
<dbReference type="PANTHER" id="PTHR22993:SF9">
    <property type="entry name" value="FORMAMIDOPYRIMIDINE-DNA GLYCOSYLASE"/>
    <property type="match status" value="1"/>
</dbReference>
<dbReference type="Pfam" id="PF01149">
    <property type="entry name" value="Fapy_DNA_glyco"/>
    <property type="match status" value="1"/>
</dbReference>
<dbReference type="Pfam" id="PF06831">
    <property type="entry name" value="H2TH"/>
    <property type="match status" value="1"/>
</dbReference>
<dbReference type="Pfam" id="PF06827">
    <property type="entry name" value="zf-FPG_IleRS"/>
    <property type="match status" value="1"/>
</dbReference>
<dbReference type="SMART" id="SM00898">
    <property type="entry name" value="Fapy_DNA_glyco"/>
    <property type="match status" value="1"/>
</dbReference>
<dbReference type="SMART" id="SM01232">
    <property type="entry name" value="H2TH"/>
    <property type="match status" value="1"/>
</dbReference>
<dbReference type="SUPFAM" id="SSF57716">
    <property type="entry name" value="Glucocorticoid receptor-like (DNA-binding domain)"/>
    <property type="match status" value="1"/>
</dbReference>
<dbReference type="SUPFAM" id="SSF81624">
    <property type="entry name" value="N-terminal domain of MutM-like DNA repair proteins"/>
    <property type="match status" value="1"/>
</dbReference>
<dbReference type="SUPFAM" id="SSF46946">
    <property type="entry name" value="S13-like H2TH domain"/>
    <property type="match status" value="1"/>
</dbReference>
<dbReference type="PROSITE" id="PS51068">
    <property type="entry name" value="FPG_CAT"/>
    <property type="match status" value="1"/>
</dbReference>
<dbReference type="PROSITE" id="PS01242">
    <property type="entry name" value="ZF_FPG_1"/>
    <property type="match status" value="1"/>
</dbReference>
<dbReference type="PROSITE" id="PS51066">
    <property type="entry name" value="ZF_FPG_2"/>
    <property type="match status" value="1"/>
</dbReference>
<reference key="1">
    <citation type="journal article" date="2008" name="PLoS ONE">
        <title>A recalibrated molecular clock and independent origins for the cholera pandemic clones.</title>
        <authorList>
            <person name="Feng L."/>
            <person name="Reeves P.R."/>
            <person name="Lan R."/>
            <person name="Ren Y."/>
            <person name="Gao C."/>
            <person name="Zhou Z."/>
            <person name="Ren Y."/>
            <person name="Cheng J."/>
            <person name="Wang W."/>
            <person name="Wang J."/>
            <person name="Qian W."/>
            <person name="Li D."/>
            <person name="Wang L."/>
        </authorList>
    </citation>
    <scope>NUCLEOTIDE SEQUENCE [LARGE SCALE GENOMIC DNA]</scope>
    <source>
        <strain>M66-2</strain>
    </source>
</reference>
<name>FPG_VIBCM</name>
<organism>
    <name type="scientific">Vibrio cholerae serotype O1 (strain M66-2)</name>
    <dbReference type="NCBI Taxonomy" id="579112"/>
    <lineage>
        <taxon>Bacteria</taxon>
        <taxon>Pseudomonadati</taxon>
        <taxon>Pseudomonadota</taxon>
        <taxon>Gammaproteobacteria</taxon>
        <taxon>Vibrionales</taxon>
        <taxon>Vibrionaceae</taxon>
        <taxon>Vibrio</taxon>
    </lineage>
</organism>
<protein>
    <recommendedName>
        <fullName evidence="2">Formamidopyrimidine-DNA glycosylase</fullName>
        <shortName evidence="2">Fapy-DNA glycosylase</shortName>
        <ecNumber evidence="2">3.2.2.23</ecNumber>
    </recommendedName>
    <alternativeName>
        <fullName evidence="2">DNA-(apurinic or apyrimidinic site) lyase MutM</fullName>
        <shortName evidence="2">AP lyase MutM</shortName>
        <ecNumber evidence="2">4.2.99.18</ecNumber>
    </alternativeName>
</protein>
<proteinExistence type="inferred from homology"/>
<accession>C3LQI3</accession>
<comment type="function">
    <text evidence="2">Involved in base excision repair of DNA damaged by oxidation or by mutagenic agents. Acts as a DNA glycosylase that recognizes and removes damaged bases. Has a preference for oxidized purines, such as 7,8-dihydro-8-oxoguanine (8-oxoG). Has AP (apurinic/apyrimidinic) lyase activity and introduces nicks in the DNA strand. Cleaves the DNA backbone by beta-delta elimination to generate a single-strand break at the site of the removed base with both 3'- and 5'-phosphates.</text>
</comment>
<comment type="catalytic activity">
    <reaction evidence="2">
        <text>Hydrolysis of DNA containing ring-opened 7-methylguanine residues, releasing 2,6-diamino-4-hydroxy-5-(N-methyl)formamidopyrimidine.</text>
        <dbReference type="EC" id="3.2.2.23"/>
    </reaction>
</comment>
<comment type="catalytic activity">
    <reaction evidence="2">
        <text>2'-deoxyribonucleotide-(2'-deoxyribose 5'-phosphate)-2'-deoxyribonucleotide-DNA = a 3'-end 2'-deoxyribonucleotide-(2,3-dehydro-2,3-deoxyribose 5'-phosphate)-DNA + a 5'-end 5'-phospho-2'-deoxyribonucleoside-DNA + H(+)</text>
        <dbReference type="Rhea" id="RHEA:66592"/>
        <dbReference type="Rhea" id="RHEA-COMP:13180"/>
        <dbReference type="Rhea" id="RHEA-COMP:16897"/>
        <dbReference type="Rhea" id="RHEA-COMP:17067"/>
        <dbReference type="ChEBI" id="CHEBI:15378"/>
        <dbReference type="ChEBI" id="CHEBI:136412"/>
        <dbReference type="ChEBI" id="CHEBI:157695"/>
        <dbReference type="ChEBI" id="CHEBI:167181"/>
        <dbReference type="EC" id="4.2.99.18"/>
    </reaction>
</comment>
<comment type="cofactor">
    <cofactor evidence="2">
        <name>Zn(2+)</name>
        <dbReference type="ChEBI" id="CHEBI:29105"/>
    </cofactor>
    <text evidence="2">Binds 1 zinc ion per subunit.</text>
</comment>
<comment type="subunit">
    <text evidence="2">Monomer.</text>
</comment>
<comment type="similarity">
    <text evidence="2">Belongs to the FPG family.</text>
</comment>
<feature type="initiator methionine" description="Removed" evidence="1">
    <location>
        <position position="1"/>
    </location>
</feature>
<feature type="chain" id="PRO_1000118905" description="Formamidopyrimidine-DNA glycosylase">
    <location>
        <begin position="2"/>
        <end position="269"/>
    </location>
</feature>
<feature type="zinc finger region" description="FPG-type" evidence="2">
    <location>
        <begin position="235"/>
        <end position="269"/>
    </location>
</feature>
<feature type="active site" description="Schiff-base intermediate with DNA" evidence="2">
    <location>
        <position position="2"/>
    </location>
</feature>
<feature type="active site" description="Proton donor" evidence="2">
    <location>
        <position position="3"/>
    </location>
</feature>
<feature type="active site" description="Proton donor; for beta-elimination activity" evidence="2">
    <location>
        <position position="57"/>
    </location>
</feature>
<feature type="active site" description="Proton donor; for delta-elimination activity" evidence="2">
    <location>
        <position position="259"/>
    </location>
</feature>
<feature type="binding site" evidence="2">
    <location>
        <position position="90"/>
    </location>
    <ligand>
        <name>DNA</name>
        <dbReference type="ChEBI" id="CHEBI:16991"/>
    </ligand>
</feature>
<feature type="binding site" evidence="2">
    <location>
        <position position="109"/>
    </location>
    <ligand>
        <name>DNA</name>
        <dbReference type="ChEBI" id="CHEBI:16991"/>
    </ligand>
</feature>
<feature type="binding site" evidence="2">
    <location>
        <position position="150"/>
    </location>
    <ligand>
        <name>DNA</name>
        <dbReference type="ChEBI" id="CHEBI:16991"/>
    </ligand>
</feature>
<keyword id="KW-0227">DNA damage</keyword>
<keyword id="KW-0234">DNA repair</keyword>
<keyword id="KW-0238">DNA-binding</keyword>
<keyword id="KW-0326">Glycosidase</keyword>
<keyword id="KW-0378">Hydrolase</keyword>
<keyword id="KW-0456">Lyase</keyword>
<keyword id="KW-0479">Metal-binding</keyword>
<keyword id="KW-0511">Multifunctional enzyme</keyword>
<keyword id="KW-0862">Zinc</keyword>
<keyword id="KW-0863">Zinc-finger</keyword>
<gene>
    <name evidence="2" type="primary">mutM</name>
    <name evidence="2" type="synonym">fpg</name>
    <name type="ordered locus">VCM66_0209</name>
</gene>
<evidence type="ECO:0000250" key="1"/>
<evidence type="ECO:0000255" key="2">
    <source>
        <dbReference type="HAMAP-Rule" id="MF_00103"/>
    </source>
</evidence>
<sequence length="269" mass="30037">MPELPEVEVSRLGISPHLVGGTIQSLVLRTPKLRWPIPQELKQLEGQTILAIHRRAKYLIIETAVGSAIVHLGMSGSLRILDGDFPAAKHDHVDLVMTSGKRLRYNDPRRFGAWLWCAPDESHEVLGRLGPEPLTEAFNAEYMMDKARNKRIAVKAFIMDNAAVVGVGNIYANESLFTSRLHPLRPAHSLSLEEWQTLVANIKQVLQVAIKQGGTTLKDFTQSDGKPGYFAQELQVYGKAKQPCPHCGEPLCEQKIAQRNTFFCPQCQH</sequence>